<evidence type="ECO:0000255" key="1">
    <source>
        <dbReference type="HAMAP-Rule" id="MF_01321"/>
    </source>
</evidence>
<evidence type="ECO:0000305" key="2"/>
<proteinExistence type="inferred from homology"/>
<dbReference type="EC" id="2.7.7.6" evidence="1"/>
<dbReference type="EMBL" id="CP000255">
    <property type="protein sequence ID" value="ABD20472.1"/>
    <property type="status" value="ALT_INIT"/>
    <property type="molecule type" value="Genomic_DNA"/>
</dbReference>
<dbReference type="RefSeq" id="WP_000918667.1">
    <property type="nucleotide sequence ID" value="NZ_CP027476.1"/>
</dbReference>
<dbReference type="SMR" id="Q2FJ98"/>
<dbReference type="KEGG" id="saa:SAUSA300_0527"/>
<dbReference type="HOGENOM" id="CLU_000524_4_1_9"/>
<dbReference type="OMA" id="FMTWEGY"/>
<dbReference type="Proteomes" id="UP000001939">
    <property type="component" value="Chromosome"/>
</dbReference>
<dbReference type="GO" id="GO:0000428">
    <property type="term" value="C:DNA-directed RNA polymerase complex"/>
    <property type="evidence" value="ECO:0007669"/>
    <property type="project" value="UniProtKB-KW"/>
</dbReference>
<dbReference type="GO" id="GO:0003677">
    <property type="term" value="F:DNA binding"/>
    <property type="evidence" value="ECO:0007669"/>
    <property type="project" value="UniProtKB-UniRule"/>
</dbReference>
<dbReference type="GO" id="GO:0003899">
    <property type="term" value="F:DNA-directed RNA polymerase activity"/>
    <property type="evidence" value="ECO:0007669"/>
    <property type="project" value="UniProtKB-UniRule"/>
</dbReference>
<dbReference type="GO" id="GO:0032549">
    <property type="term" value="F:ribonucleoside binding"/>
    <property type="evidence" value="ECO:0007669"/>
    <property type="project" value="InterPro"/>
</dbReference>
<dbReference type="GO" id="GO:0006351">
    <property type="term" value="P:DNA-templated transcription"/>
    <property type="evidence" value="ECO:0007669"/>
    <property type="project" value="UniProtKB-UniRule"/>
</dbReference>
<dbReference type="CDD" id="cd00653">
    <property type="entry name" value="RNA_pol_B_RPB2"/>
    <property type="match status" value="1"/>
</dbReference>
<dbReference type="FunFam" id="3.90.1800.10:FF:000001">
    <property type="entry name" value="DNA-directed RNA polymerase subunit beta"/>
    <property type="match status" value="1"/>
</dbReference>
<dbReference type="Gene3D" id="2.40.50.100">
    <property type="match status" value="1"/>
</dbReference>
<dbReference type="Gene3D" id="2.40.50.150">
    <property type="match status" value="1"/>
</dbReference>
<dbReference type="Gene3D" id="3.90.1100.10">
    <property type="match status" value="3"/>
</dbReference>
<dbReference type="Gene3D" id="2.40.270.10">
    <property type="entry name" value="DNA-directed RNA polymerase, subunit 2, domain 6"/>
    <property type="match status" value="1"/>
</dbReference>
<dbReference type="Gene3D" id="3.90.1800.10">
    <property type="entry name" value="RNA polymerase alpha subunit dimerisation domain"/>
    <property type="match status" value="1"/>
</dbReference>
<dbReference type="Gene3D" id="3.90.1110.10">
    <property type="entry name" value="RNA polymerase Rpb2, domain 2"/>
    <property type="match status" value="1"/>
</dbReference>
<dbReference type="HAMAP" id="MF_01321">
    <property type="entry name" value="RNApol_bact_RpoB"/>
    <property type="match status" value="1"/>
</dbReference>
<dbReference type="InterPro" id="IPR019462">
    <property type="entry name" value="DNA-dir_RNA_pol_bsu_external_1"/>
</dbReference>
<dbReference type="InterPro" id="IPR015712">
    <property type="entry name" value="DNA-dir_RNA_pol_su2"/>
</dbReference>
<dbReference type="InterPro" id="IPR007120">
    <property type="entry name" value="DNA-dir_RNAP_su2_dom"/>
</dbReference>
<dbReference type="InterPro" id="IPR037033">
    <property type="entry name" value="DNA-dir_RNAP_su2_hyb_sf"/>
</dbReference>
<dbReference type="InterPro" id="IPR010243">
    <property type="entry name" value="RNA_pol_bsu_bac"/>
</dbReference>
<dbReference type="InterPro" id="IPR007121">
    <property type="entry name" value="RNA_pol_bsu_CS"/>
</dbReference>
<dbReference type="InterPro" id="IPR007644">
    <property type="entry name" value="RNA_pol_bsu_protrusion"/>
</dbReference>
<dbReference type="InterPro" id="IPR007642">
    <property type="entry name" value="RNA_pol_Rpb2_2"/>
</dbReference>
<dbReference type="InterPro" id="IPR037034">
    <property type="entry name" value="RNA_pol_Rpb2_2_sf"/>
</dbReference>
<dbReference type="InterPro" id="IPR007645">
    <property type="entry name" value="RNA_pol_Rpb2_3"/>
</dbReference>
<dbReference type="InterPro" id="IPR007641">
    <property type="entry name" value="RNA_pol_Rpb2_7"/>
</dbReference>
<dbReference type="InterPro" id="IPR014724">
    <property type="entry name" value="RNA_pol_RPB2_OB-fold"/>
</dbReference>
<dbReference type="NCBIfam" id="NF001616">
    <property type="entry name" value="PRK00405.1"/>
    <property type="match status" value="1"/>
</dbReference>
<dbReference type="NCBIfam" id="TIGR02013">
    <property type="entry name" value="rpoB"/>
    <property type="match status" value="1"/>
</dbReference>
<dbReference type="PANTHER" id="PTHR20856">
    <property type="entry name" value="DNA-DIRECTED RNA POLYMERASE I SUBUNIT 2"/>
    <property type="match status" value="1"/>
</dbReference>
<dbReference type="Pfam" id="PF04563">
    <property type="entry name" value="RNA_pol_Rpb2_1"/>
    <property type="match status" value="1"/>
</dbReference>
<dbReference type="Pfam" id="PF04561">
    <property type="entry name" value="RNA_pol_Rpb2_2"/>
    <property type="match status" value="2"/>
</dbReference>
<dbReference type="Pfam" id="PF04565">
    <property type="entry name" value="RNA_pol_Rpb2_3"/>
    <property type="match status" value="1"/>
</dbReference>
<dbReference type="Pfam" id="PF10385">
    <property type="entry name" value="RNA_pol_Rpb2_45"/>
    <property type="match status" value="1"/>
</dbReference>
<dbReference type="Pfam" id="PF00562">
    <property type="entry name" value="RNA_pol_Rpb2_6"/>
    <property type="match status" value="1"/>
</dbReference>
<dbReference type="Pfam" id="PF04560">
    <property type="entry name" value="RNA_pol_Rpb2_7"/>
    <property type="match status" value="1"/>
</dbReference>
<dbReference type="SUPFAM" id="SSF64484">
    <property type="entry name" value="beta and beta-prime subunits of DNA dependent RNA-polymerase"/>
    <property type="match status" value="1"/>
</dbReference>
<dbReference type="PROSITE" id="PS01166">
    <property type="entry name" value="RNA_POL_BETA"/>
    <property type="match status" value="1"/>
</dbReference>
<sequence>MAGQVVQYGRHRKRRNYARISEVLELPNLIEIQTKSYEWFLREGLIEMFRDISPIEDFTGNLSLEFVDYRLGEPKYDLEESKNRDATYAAPLRVKVRLIIKETGEVKEQEVFMGDFPLMTDTGTFVINGAERVIVSQLVRSPSVYFNEKIDKNGRENYDATIIPNRGAWLEYETDAKDVVYVRIDRTRKLPLTVLLRALGFSSDQEIVDLLGDNEYLRNTLEKDGTENTEQALLEIYERLRPGEPPTVENAKSLLYSRFFDPKRYDLASVGRYKTNKKLHLKHRLFNQKLAEPIVNTETGEIVVEEGTVLDRRKIDEIMDVLESNANSEVFELHGSVIDEPVEIQSIKVYVPNDDEGRTTTVIGNAFPDSEVKCITPADIIASMSYFFNLLSGIGYTDDIDHLGNRRLRSVGELLQNQFRIGLSRMERVVRERMSIQDTESITPQQLINIRPVIASIKEFFGSSQLSQFMDQANPLAELTHKRRLSALGPGGLTRERAQMEVRDVHYSHYGRMCPIETPEGPNIGLINSLSSYARVNEFGFIETPYRKVDLDTHAITDQIDYLTADEEDSYVVAQANSKLDENGRFMDDEVVCRFRGNNTVMAKEKMDYMDVSPKQVVSAATACIPFLENDDSNRALMGANMQRQAVPLMNPEAPFVGTGMEHVAARDSGAAITAKHRGRVEHVESNEILVRRLVEENGVEHEGELDRYPLAKFKRSNSGTCYNQRPIVAVGDVVEYNEILADGPSMELGEMALGRNVVVGFMTWDGYNYEDAVIMSERLVKDDVYTSIHIEEYESEARDTKLGPEEITRDIPNVSESALKNLDDRGIVYIGAEVKDGDILVGKVTPKGVTELTAEERLLHAIFGEKAREVRDTSLRVPHGAGGIVLDVKVFNREEGDDTLSPGVNQLVRVYIVQKRKIHVGDKMCGRHGNKGVISKIVPEEDMPYLPDGRPIDIMLNPLGVPSRMNIGQVLELHLGMAAKNLGIHVASPVFDGANDDDVWSTIEEAGMARDGKTVLYDGRTGEPFDNRISVGVMYMLKLAHMVDDKLHARSTGPYSLVTQQPLGGKAQFGGQRFGEMEVWALEAYGAAYTLQEILTYKSDDTVGRVKTYEAIVKGENISRPSVPESFRVLMKELQSLGLDVKVMDEQDNEIEMTDVDDDDVVERKVDLQQNDAPETQKEVTD</sequence>
<keyword id="KW-0240">DNA-directed RNA polymerase</keyword>
<keyword id="KW-0548">Nucleotidyltransferase</keyword>
<keyword id="KW-0804">Transcription</keyword>
<keyword id="KW-0808">Transferase</keyword>
<name>RPOB_STAA3</name>
<reference key="1">
    <citation type="journal article" date="2006" name="Lancet">
        <title>Complete genome sequence of USA300, an epidemic clone of community-acquired meticillin-resistant Staphylococcus aureus.</title>
        <authorList>
            <person name="Diep B.A."/>
            <person name="Gill S.R."/>
            <person name="Chang R.F."/>
            <person name="Phan T.H."/>
            <person name="Chen J.H."/>
            <person name="Davidson M.G."/>
            <person name="Lin F."/>
            <person name="Lin J."/>
            <person name="Carleton H.A."/>
            <person name="Mongodin E.F."/>
            <person name="Sensabaugh G.F."/>
            <person name="Perdreau-Remington F."/>
        </authorList>
    </citation>
    <scope>NUCLEOTIDE SEQUENCE [LARGE SCALE GENOMIC DNA]</scope>
    <source>
        <strain>USA300</strain>
    </source>
</reference>
<protein>
    <recommendedName>
        <fullName evidence="1">DNA-directed RNA polymerase subunit beta</fullName>
        <shortName evidence="1">RNAP subunit beta</shortName>
        <ecNumber evidence="1">2.7.7.6</ecNumber>
    </recommendedName>
    <alternativeName>
        <fullName evidence="1">RNA polymerase subunit beta</fullName>
    </alternativeName>
    <alternativeName>
        <fullName evidence="1">Transcriptase subunit beta</fullName>
    </alternativeName>
</protein>
<feature type="chain" id="PRO_0000237315" description="DNA-directed RNA polymerase subunit beta">
    <location>
        <begin position="1"/>
        <end position="1183"/>
    </location>
</feature>
<accession>Q2FJ98</accession>
<gene>
    <name evidence="1" type="primary">rpoB</name>
    <name type="ordered locus">SAUSA300_0527</name>
</gene>
<organism>
    <name type="scientific">Staphylococcus aureus (strain USA300)</name>
    <dbReference type="NCBI Taxonomy" id="367830"/>
    <lineage>
        <taxon>Bacteria</taxon>
        <taxon>Bacillati</taxon>
        <taxon>Bacillota</taxon>
        <taxon>Bacilli</taxon>
        <taxon>Bacillales</taxon>
        <taxon>Staphylococcaceae</taxon>
        <taxon>Staphylococcus</taxon>
    </lineage>
</organism>
<comment type="function">
    <text evidence="1">DNA-dependent RNA polymerase catalyzes the transcription of DNA into RNA using the four ribonucleoside triphosphates as substrates.</text>
</comment>
<comment type="catalytic activity">
    <reaction evidence="1">
        <text>RNA(n) + a ribonucleoside 5'-triphosphate = RNA(n+1) + diphosphate</text>
        <dbReference type="Rhea" id="RHEA:21248"/>
        <dbReference type="Rhea" id="RHEA-COMP:14527"/>
        <dbReference type="Rhea" id="RHEA-COMP:17342"/>
        <dbReference type="ChEBI" id="CHEBI:33019"/>
        <dbReference type="ChEBI" id="CHEBI:61557"/>
        <dbReference type="ChEBI" id="CHEBI:140395"/>
        <dbReference type="EC" id="2.7.7.6"/>
    </reaction>
</comment>
<comment type="subunit">
    <text evidence="1">The RNAP catalytic core consists of 2 alpha, 1 beta, 1 beta' and 1 omega subunit. When a sigma factor is associated with the core the holoenzyme is formed, which can initiate transcription.</text>
</comment>
<comment type="similarity">
    <text evidence="1">Belongs to the RNA polymerase beta chain family.</text>
</comment>
<comment type="sequence caution" evidence="2">
    <conflict type="erroneous initiation">
        <sequence resource="EMBL-CDS" id="ABD20472"/>
    </conflict>
</comment>